<evidence type="ECO:0000250" key="1">
    <source>
        <dbReference type="UniProtKB" id="P01042"/>
    </source>
</evidence>
<evidence type="ECO:0000269" key="2">
    <source>
    </source>
</evidence>
<evidence type="ECO:0000303" key="3">
    <source>
    </source>
</evidence>
<evidence type="ECO:0000305" key="4"/>
<organism evidence="4">
    <name type="scientific">Anarhichas minor</name>
    <name type="common">Arctic spotted wolffish</name>
    <dbReference type="NCBI Taxonomy" id="65739"/>
    <lineage>
        <taxon>Eukaryota</taxon>
        <taxon>Metazoa</taxon>
        <taxon>Chordata</taxon>
        <taxon>Craniata</taxon>
        <taxon>Vertebrata</taxon>
        <taxon>Euteleostomi</taxon>
        <taxon>Actinopterygii</taxon>
        <taxon>Neopterygii</taxon>
        <taxon>Teleostei</taxon>
        <taxon>Neoteleostei</taxon>
        <taxon>Acanthomorphata</taxon>
        <taxon>Eupercaria</taxon>
        <taxon>Perciformes</taxon>
        <taxon>Cottioidei</taxon>
        <taxon>Zoarcales</taxon>
        <taxon>Anarhichadidae</taxon>
        <taxon>Anarhichas</taxon>
    </lineage>
</organism>
<sequence length="188" mass="21006">XLVQPGVLIFCDDPSYNSMSDSTHLFTLHFVXYSENGSDSVYSLQFTSRSDCPAGSNKPWTECDYLSYERRFNERLSTGHKQVYCLLDDVIIPEKAPCLGCPMEVDENSEDLKFPLSVSISKAGALPTMFTRRRPPGWSPLRRKKPISCNATVYMTETEADTKDLNDLCVPDDQNAGYANCNSTVNVA</sequence>
<proteinExistence type="evidence at protein level"/>
<feature type="chain" id="PRO_0000045863" description="Kininogen">
    <location>
        <begin position="1"/>
        <end position="188" status="greater than"/>
    </location>
</feature>
<feature type="peptide" id="PRO_0000006707" description="Bradykinin" evidence="1">
    <location>
        <begin position="134"/>
        <end position="142"/>
    </location>
</feature>
<feature type="glycosylation site" description="N-linked (GlcNAc...) asparagine" evidence="4">
    <location>
        <position position="36"/>
    </location>
</feature>
<feature type="glycosylation site" description="N-linked (GlcNAc...) asparagine" evidence="4">
    <location>
        <position position="150"/>
    </location>
</feature>
<feature type="glycosylation site" description="N-linked (GlcNAc...) asparagine" evidence="4">
    <location>
        <position position="182"/>
    </location>
</feature>
<feature type="non-consecutive residues" evidence="3">
    <location>
        <begin position="15"/>
        <end position="16"/>
    </location>
</feature>
<feature type="non-consecutive residues" evidence="3">
    <location>
        <begin position="33"/>
        <end position="34"/>
    </location>
</feature>
<feature type="non-consecutive residues" evidence="3">
    <location>
        <begin position="49"/>
        <end position="50"/>
    </location>
</feature>
<feature type="non-consecutive residues" evidence="3">
    <location>
        <begin position="71"/>
        <end position="72"/>
    </location>
</feature>
<feature type="non-consecutive residues" evidence="3">
    <location>
        <begin position="81"/>
        <end position="82"/>
    </location>
</feature>
<feature type="non-consecutive residues" evidence="3">
    <location>
        <begin position="113"/>
        <end position="114"/>
    </location>
</feature>
<feature type="non-consecutive residues" evidence="3">
    <location>
        <begin position="122"/>
        <end position="123"/>
    </location>
</feature>
<feature type="non-consecutive residues" evidence="3">
    <location>
        <begin position="142"/>
        <end position="143"/>
    </location>
</feature>
<feature type="non-consecutive residues" evidence="3">
    <location>
        <begin position="163"/>
        <end position="164"/>
    </location>
</feature>
<feature type="non-terminal residue" evidence="3">
    <location>
        <position position="188"/>
    </location>
</feature>
<dbReference type="GO" id="GO:0004869">
    <property type="term" value="F:cysteine-type endopeptidase inhibitor activity"/>
    <property type="evidence" value="ECO:0007669"/>
    <property type="project" value="UniProtKB-KW"/>
</dbReference>
<dbReference type="GO" id="GO:0042311">
    <property type="term" value="P:vasodilation"/>
    <property type="evidence" value="ECO:0007669"/>
    <property type="project" value="UniProtKB-KW"/>
</dbReference>
<dbReference type="Gene3D" id="3.10.450.10">
    <property type="match status" value="1"/>
</dbReference>
<protein>
    <recommendedName>
        <fullName>Kininogen</fullName>
    </recommendedName>
    <component>
        <recommendedName>
            <fullName>Bradykinin</fullName>
        </recommendedName>
    </component>
</protein>
<name>KNG_ANAMI</name>
<comment type="function">
    <text evidence="2">Inhibits papain and ficin (cysteine proteinases) but not trypsin (a serine proteinase).</text>
</comment>
<comment type="PTM">
    <text evidence="1">Bradykinin is released from kininogen by kallikrein.</text>
</comment>
<comment type="PTM">
    <text evidence="2">N-glycosylated. Contains O-acetylated sialic acids as terminal elements on biantennary and triantennary N-glycans.</text>
</comment>
<comment type="mass spectrometry" mass="45800.0" method="MALDI" evidence="2">
    <molecule>Kininogen</molecule>
</comment>
<comment type="caution">
    <text evidence="4">The order of the last 2 peptides shown is unknown.</text>
</comment>
<accession>P83857</accession>
<reference evidence="4" key="1">
    <citation type="journal article" date="2002" name="Eur. J. Biochem.">
        <title>Purification and characterization of novel kininogens from spotted wolffish and Atlantic cod.</title>
        <authorList>
            <person name="Yloenen A."/>
            <person name="Helin J."/>
            <person name="Bogwald J."/>
            <person name="Jaakola A."/>
            <person name="Rinne A."/>
            <person name="Kalkkinen N."/>
        </authorList>
    </citation>
    <scope>PROTEIN SEQUENCE</scope>
    <scope>FUNCTION</scope>
    <scope>GLYCOSYLATION</scope>
    <scope>MASS SPECTROMETRY</scope>
    <source>
        <tissue evidence="2">Skin</tissue>
    </source>
</reference>
<keyword id="KW-0165">Cleavage on pair of basic residues</keyword>
<keyword id="KW-0903">Direct protein sequencing</keyword>
<keyword id="KW-0325">Glycoprotein</keyword>
<keyword id="KW-0646">Protease inhibitor</keyword>
<keyword id="KW-0789">Thiol protease inhibitor</keyword>
<keyword id="KW-0838">Vasoactive</keyword>
<keyword id="KW-0840">Vasodilator</keyword>